<feature type="chain" id="PRO_0000110097" description="Fluoride-specific ion channel FluC">
    <location>
        <begin position="1"/>
        <end position="127"/>
    </location>
</feature>
<feature type="transmembrane region" description="Helical" evidence="1">
    <location>
        <begin position="4"/>
        <end position="24"/>
    </location>
</feature>
<feature type="transmembrane region" description="Helical" evidence="1">
    <location>
        <begin position="35"/>
        <end position="55"/>
    </location>
</feature>
<feature type="transmembrane region" description="Helical" evidence="1">
    <location>
        <begin position="71"/>
        <end position="91"/>
    </location>
</feature>
<feature type="transmembrane region" description="Helical" evidence="1">
    <location>
        <begin position="103"/>
        <end position="123"/>
    </location>
</feature>
<feature type="binding site" evidence="1">
    <location>
        <position position="75"/>
    </location>
    <ligand>
        <name>Na(+)</name>
        <dbReference type="ChEBI" id="CHEBI:29101"/>
        <note>structural</note>
    </ligand>
</feature>
<feature type="binding site" evidence="1">
    <location>
        <position position="78"/>
    </location>
    <ligand>
        <name>Na(+)</name>
        <dbReference type="ChEBI" id="CHEBI:29101"/>
        <note>structural</note>
    </ligand>
</feature>
<evidence type="ECO:0000255" key="1">
    <source>
        <dbReference type="HAMAP-Rule" id="MF_00454"/>
    </source>
</evidence>
<evidence type="ECO:0000269" key="2">
    <source>
    </source>
</evidence>
<evidence type="ECO:0000269" key="3">
    <source>
    </source>
</evidence>
<evidence type="ECO:0000269" key="4">
    <source>
    </source>
</evidence>
<evidence type="ECO:0000269" key="5">
    <source>
    </source>
</evidence>
<evidence type="ECO:0000269" key="6">
    <source>
    </source>
</evidence>
<evidence type="ECO:0000303" key="7">
    <source>
    </source>
</evidence>
<evidence type="ECO:0000303" key="8">
    <source>
    </source>
</evidence>
<evidence type="ECO:0000303" key="9">
    <source>
    </source>
</evidence>
<evidence type="ECO:0000305" key="10">
    <source>
    </source>
</evidence>
<evidence type="ECO:0000305" key="11">
    <source>
    </source>
</evidence>
<evidence type="ECO:0000305" key="12">
    <source>
    </source>
</evidence>
<sequence length="127" mass="13777">MLQLLLAVFIGGGTGSVARWLLSMRFNPLHQAIPLGTLTANLIGAFIIGIGFAWFSRMTNIDPVWKVLITTGFCGGLTTFSTFSAEVVFLLQEGRFGWALLNVFVNLLGSFAMTALAFWLFSASTAH</sequence>
<reference key="1">
    <citation type="submission" date="1994-02" db="EMBL/GenBank/DDBJ databases">
        <authorList>
            <person name="Yamanaka K."/>
            <person name="Mitani T."/>
            <person name="Ogura T."/>
            <person name="Niki H."/>
            <person name="Hiraga S."/>
        </authorList>
    </citation>
    <scope>NUCLEOTIDE SEQUENCE [GENOMIC DNA]</scope>
    <source>
        <strain>K12</strain>
    </source>
</reference>
<reference key="2">
    <citation type="journal article" date="1996" name="Genetics">
        <title>Overproduction of three genes leads to camphor resistance and chromosome condensation in Escherichia coli.</title>
        <authorList>
            <person name="Hu K.H."/>
            <person name="Liu E."/>
            <person name="Dean K."/>
            <person name="Gingras M."/>
            <person name="Degraff W."/>
            <person name="Trun N.J."/>
        </authorList>
    </citation>
    <scope>NUCLEOTIDE SEQUENCE [GENOMIC DNA]</scope>
    <scope>OVEREXPRESSION</scope>
    <source>
        <strain>K12</strain>
    </source>
</reference>
<reference key="3">
    <citation type="journal article" date="1996" name="DNA Res.">
        <title>A 718-kb DNA sequence of the Escherichia coli K-12 genome corresponding to the 12.7-28.0 min region on the linkage map.</title>
        <authorList>
            <person name="Oshima T."/>
            <person name="Aiba H."/>
            <person name="Baba T."/>
            <person name="Fujita K."/>
            <person name="Hayashi K."/>
            <person name="Honjo A."/>
            <person name="Ikemoto K."/>
            <person name="Inada T."/>
            <person name="Itoh T."/>
            <person name="Kajihara M."/>
            <person name="Kanai K."/>
            <person name="Kashimoto K."/>
            <person name="Kimura S."/>
            <person name="Kitagawa M."/>
            <person name="Makino K."/>
            <person name="Masuda S."/>
            <person name="Miki T."/>
            <person name="Mizobuchi K."/>
            <person name="Mori H."/>
            <person name="Motomura K."/>
            <person name="Nakamura Y."/>
            <person name="Nashimoto H."/>
            <person name="Nishio Y."/>
            <person name="Saito N."/>
            <person name="Sampei G."/>
            <person name="Seki Y."/>
            <person name="Tagami H."/>
            <person name="Takemoto K."/>
            <person name="Wada C."/>
            <person name="Yamamoto Y."/>
            <person name="Yano M."/>
            <person name="Horiuchi T."/>
        </authorList>
    </citation>
    <scope>NUCLEOTIDE SEQUENCE [LARGE SCALE GENOMIC DNA]</scope>
    <source>
        <strain>K12 / W3110 / ATCC 27325 / DSM 5911</strain>
    </source>
</reference>
<reference key="4">
    <citation type="submission" date="1997-01" db="EMBL/GenBank/DDBJ databases">
        <title>Sequence of minutes 4-25 of Escherichia coli.</title>
        <authorList>
            <person name="Chung E."/>
            <person name="Allen E."/>
            <person name="Araujo R."/>
            <person name="Aparicio A.M."/>
            <person name="Davis K."/>
            <person name="Duncan M."/>
            <person name="Federspiel N."/>
            <person name="Hyman R."/>
            <person name="Kalman S."/>
            <person name="Komp C."/>
            <person name="Kurdi O."/>
            <person name="Lew H."/>
            <person name="Lin D."/>
            <person name="Namath A."/>
            <person name="Oefner P."/>
            <person name="Roberts D."/>
            <person name="Schramm S."/>
            <person name="Davis R.W."/>
        </authorList>
    </citation>
    <scope>NUCLEOTIDE SEQUENCE [LARGE SCALE GENOMIC DNA]</scope>
    <source>
        <strain>K12 / MG1655 / ATCC 47076</strain>
    </source>
</reference>
<reference key="5">
    <citation type="journal article" date="1997" name="Science">
        <title>The complete genome sequence of Escherichia coli K-12.</title>
        <authorList>
            <person name="Blattner F.R."/>
            <person name="Plunkett G. III"/>
            <person name="Bloch C.A."/>
            <person name="Perna N.T."/>
            <person name="Burland V."/>
            <person name="Riley M."/>
            <person name="Collado-Vides J."/>
            <person name="Glasner J.D."/>
            <person name="Rode C.K."/>
            <person name="Mayhew G.F."/>
            <person name="Gregor J."/>
            <person name="Davis N.W."/>
            <person name="Kirkpatrick H.A."/>
            <person name="Goeden M.A."/>
            <person name="Rose D.J."/>
            <person name="Mau B."/>
            <person name="Shao Y."/>
        </authorList>
    </citation>
    <scope>NUCLEOTIDE SEQUENCE [LARGE SCALE GENOMIC DNA]</scope>
    <source>
        <strain>K12 / MG1655 / ATCC 47076</strain>
    </source>
</reference>
<reference key="6">
    <citation type="journal article" date="2006" name="Mol. Syst. Biol.">
        <title>Highly accurate genome sequences of Escherichia coli K-12 strains MG1655 and W3110.</title>
        <authorList>
            <person name="Hayashi K."/>
            <person name="Morooka N."/>
            <person name="Yamamoto Y."/>
            <person name="Fujita K."/>
            <person name="Isono K."/>
            <person name="Choi S."/>
            <person name="Ohtsubo E."/>
            <person name="Baba T."/>
            <person name="Wanner B.L."/>
            <person name="Mori H."/>
            <person name="Horiuchi T."/>
        </authorList>
    </citation>
    <scope>NUCLEOTIDE SEQUENCE [LARGE SCALE GENOMIC DNA]</scope>
    <source>
        <strain>K12 / W3110 / ATCC 27325 / DSM 5911</strain>
    </source>
</reference>
<reference key="7">
    <citation type="unpublished observations" date="1994-03">
        <authorList>
            <person name="Rudd K.E."/>
        </authorList>
    </citation>
    <scope>IDENTIFICATION</scope>
</reference>
<reference key="8">
    <citation type="journal article" date="2003" name="Microbiology">
        <title>Phenotypic characterization of overexpression or deletion of the Escherichia coli crcA, cspE and crcB genes.</title>
        <authorList>
            <person name="Sand O."/>
            <person name="Gingras M."/>
            <person name="Beck N."/>
            <person name="Hall C."/>
            <person name="Trun N."/>
        </authorList>
    </citation>
    <scope>DISRUPTION PHENOTYPE</scope>
    <scope>OVEREXPRESSION</scope>
    <source>
        <strain>K12 / MC4100 / ATCC 35695 / DSM 6574</strain>
    </source>
</reference>
<reference key="9">
    <citation type="journal article" date="2005" name="Science">
        <title>Global topology analysis of the Escherichia coli inner membrane proteome.</title>
        <authorList>
            <person name="Daley D.O."/>
            <person name="Rapp M."/>
            <person name="Granseth E."/>
            <person name="Melen K."/>
            <person name="Drew D."/>
            <person name="von Heijne G."/>
        </authorList>
    </citation>
    <scope>TOPOLOGY [LARGE SCALE ANALYSIS]</scope>
    <scope>SUBCELLULAR LOCATION</scope>
    <source>
        <strain>K12 / MG1655 / ATCC 47076</strain>
    </source>
</reference>
<reference key="10">
    <citation type="journal article" date="2006" name="Nat. Struct. Mol. Biol.">
        <title>Identification and evolution of dual-topology membrane proteins.</title>
        <authorList>
            <person name="Rapp M."/>
            <person name="Granseth E."/>
            <person name="Seppala S."/>
            <person name="von Heijne G."/>
        </authorList>
    </citation>
    <scope>TOPOLOGY</scope>
    <scope>SUBCELLULAR LOCATION</scope>
</reference>
<reference key="11">
    <citation type="journal article" date="2012" name="Science">
        <title>Widespread genetic switches and toxicity resistance proteins for fluoride.</title>
        <authorList>
            <person name="Baker J.L."/>
            <person name="Sudarsan N."/>
            <person name="Weinberg Z."/>
            <person name="Roth A."/>
            <person name="Stockbridge R.B."/>
            <person name="Breaker R.R."/>
        </authorList>
    </citation>
    <scope>FUNCTION</scope>
    <scope>INDUCTION</scope>
    <scope>DISRUPTION PHENOTYPE</scope>
</reference>
<reference key="12">
    <citation type="journal article" date="2014" name="J. Gen. Physiol.">
        <title>Bacterial fluoride resistance, Fluc channels, and the weak acid accumulation effect.</title>
        <authorList>
            <person name="Ji C."/>
            <person name="Stockbridge R.B."/>
            <person name="Miller C."/>
        </authorList>
    </citation>
    <scope>FUNCTION</scope>
    <scope>TRANSPORTER ACTIVITY</scope>
    <scope>DISRUPTION PHENOTYPE</scope>
    <source>
        <strain>K12 / BW25113</strain>
    </source>
</reference>
<reference key="13">
    <citation type="journal article" date="2021" name="Annu. Rev. Biochem.">
        <title>Membrane Exporters of Fluoride Ion.</title>
        <authorList>
            <person name="McIlwain B.C."/>
            <person name="Ruprecht M.T."/>
            <person name="Stockbridge R.B."/>
        </authorList>
    </citation>
    <scope>REVIEW</scope>
    <scope>NOMENCLATURE</scope>
</reference>
<gene>
    <name evidence="1 7 8" type="primary">fluC</name>
    <name evidence="9" type="synonym">crcB</name>
    <name type="synonym">ybeI</name>
    <name type="ordered locus">b0624</name>
    <name type="ordered locus">JW0619</name>
</gene>
<comment type="function">
    <text evidence="5 6">Fluoride-specific ion channel (PubMed:25156118). Important for reducing fluoride concentration in the cell, thus reducing its toxicity (PubMed:22194412, PubMed:25156118). Required to counteract cytoplasmic fluoride accumulation driven by pH gradients across the bacterial inner membrane set up by mild acidification of the growth medium (PubMed:25156118).</text>
</comment>
<comment type="catalytic activity">
    <reaction evidence="1 6">
        <text>fluoride(in) = fluoride(out)</text>
        <dbReference type="Rhea" id="RHEA:76159"/>
        <dbReference type="ChEBI" id="CHEBI:17051"/>
    </reaction>
    <physiologicalReaction direction="left-to-right" evidence="1 6">
        <dbReference type="Rhea" id="RHEA:76160"/>
    </physiologicalReaction>
</comment>
<comment type="activity regulation">
    <text evidence="1">Na(+) is not transported, but it plays an essential structural role and its presence is essential for fluoride channel function.</text>
</comment>
<comment type="subcellular location">
    <subcellularLocation>
        <location evidence="1 3 4">Cell inner membrane</location>
        <topology evidence="1 4">Multi-pass membrane protein</topology>
    </subcellularLocation>
    <text evidence="4">Could be a dual-topology protein, which inserts into the membrane in two opposite orientations (PubMed:16429150). May form an antiparallel homodimer in the inner membrane (PubMed:16429150).</text>
</comment>
<comment type="induction">
    <text evidence="5">By fluoride, via a fluoride-responsive riboswitch.</text>
</comment>
<comment type="disruption phenotype">
    <text evidence="2 5 6">Mutants show increased sensitivity to fluoride (PubMed:22194412). Knockout mutant displays pH-dependent hypersensitivity to fluoride ions (PubMed:25156118). Deletion of pagP (crcA), cspE and fluC (crcB) increases sensitivity to camphor and exacerbates the nucleoid morphology defects of the topoisomerase IV temperature-sensitive mutants (PubMed:12904550).</text>
</comment>
<comment type="miscellaneous">
    <text evidence="10 12">Overexpression of pagP (crcA), cspE and fluC (crcB) leads to camphor resistance, chromosome condensation and suppression of growth defects of mukB mutants (PubMed:8844142). Overexpression also increases levels of plasmid supercoiling, results in increased resistance to nalidixic acid in gyrase and topoisomerase IV temperature-sensitive mutants and affects the regulation of several genes (PubMed:12904550).</text>
</comment>
<comment type="similarity">
    <text evidence="1 11">Belongs to the fluoride channel Fluc/FEX (TC 1.A.43) family.</text>
</comment>
<name>FLUC_ECOLI</name>
<accession>P37002</accession>
<organism>
    <name type="scientific">Escherichia coli (strain K12)</name>
    <dbReference type="NCBI Taxonomy" id="83333"/>
    <lineage>
        <taxon>Bacteria</taxon>
        <taxon>Pseudomonadati</taxon>
        <taxon>Pseudomonadota</taxon>
        <taxon>Gammaproteobacteria</taxon>
        <taxon>Enterobacterales</taxon>
        <taxon>Enterobacteriaceae</taxon>
        <taxon>Escherichia</taxon>
    </lineage>
</organism>
<proteinExistence type="evidence at protein level"/>
<dbReference type="EMBL" id="D28497">
    <property type="status" value="NOT_ANNOTATED_CDS"/>
    <property type="molecule type" value="Genomic_DNA"/>
</dbReference>
<dbReference type="EMBL" id="S83396">
    <property type="status" value="NOT_ANNOTATED_CDS"/>
    <property type="molecule type" value="Genomic_DNA"/>
</dbReference>
<dbReference type="EMBL" id="U82598">
    <property type="protein sequence ID" value="AAB40824.1"/>
    <property type="molecule type" value="Genomic_DNA"/>
</dbReference>
<dbReference type="EMBL" id="U00096">
    <property type="protein sequence ID" value="AAC73725.1"/>
    <property type="molecule type" value="Genomic_DNA"/>
</dbReference>
<dbReference type="EMBL" id="AP009048">
    <property type="protein sequence ID" value="BAA35267.1"/>
    <property type="molecule type" value="Genomic_DNA"/>
</dbReference>
<dbReference type="PIR" id="F64796">
    <property type="entry name" value="F64796"/>
</dbReference>
<dbReference type="RefSeq" id="NP_415157.1">
    <property type="nucleotide sequence ID" value="NC_000913.3"/>
</dbReference>
<dbReference type="RefSeq" id="WP_000939747.1">
    <property type="nucleotide sequence ID" value="NZ_SSZK01000037.1"/>
</dbReference>
<dbReference type="SMR" id="P37002"/>
<dbReference type="BioGRID" id="4260641">
    <property type="interactions" value="197"/>
</dbReference>
<dbReference type="FunCoup" id="P37002">
    <property type="interactions" value="428"/>
</dbReference>
<dbReference type="IntAct" id="P37002">
    <property type="interactions" value="1"/>
</dbReference>
<dbReference type="STRING" id="511145.b0624"/>
<dbReference type="TCDB" id="1.A.43.1.1">
    <property type="family name" value="the camphor resistance or fluoride exporter (fluc) family"/>
</dbReference>
<dbReference type="PaxDb" id="511145-b0624"/>
<dbReference type="EnsemblBacteria" id="AAC73725">
    <property type="protein sequence ID" value="AAC73725"/>
    <property type="gene ID" value="b0624"/>
</dbReference>
<dbReference type="GeneID" id="945798"/>
<dbReference type="KEGG" id="ecj:JW0619"/>
<dbReference type="KEGG" id="eco:b0624"/>
<dbReference type="KEGG" id="ecoc:C3026_03120"/>
<dbReference type="PATRIC" id="fig|511145.12.peg.654"/>
<dbReference type="EchoBASE" id="EB2123"/>
<dbReference type="eggNOG" id="COG0239">
    <property type="taxonomic scope" value="Bacteria"/>
</dbReference>
<dbReference type="HOGENOM" id="CLU_114342_3_3_6"/>
<dbReference type="InParanoid" id="P37002"/>
<dbReference type="OMA" id="NDKWLNG"/>
<dbReference type="OrthoDB" id="9806299at2"/>
<dbReference type="PhylomeDB" id="P37002"/>
<dbReference type="BioCyc" id="EcoCyc:EG12209-MONOMER"/>
<dbReference type="BioCyc" id="MetaCyc:EG12209-MONOMER"/>
<dbReference type="PRO" id="PR:P37002"/>
<dbReference type="Proteomes" id="UP000000625">
    <property type="component" value="Chromosome"/>
</dbReference>
<dbReference type="GO" id="GO:0005886">
    <property type="term" value="C:plasma membrane"/>
    <property type="evidence" value="ECO:0000314"/>
    <property type="project" value="EcoCyc"/>
</dbReference>
<dbReference type="GO" id="GO:0062054">
    <property type="term" value="F:fluoride channel activity"/>
    <property type="evidence" value="ECO:0007669"/>
    <property type="project" value="UniProtKB-UniRule"/>
</dbReference>
<dbReference type="GO" id="GO:1903425">
    <property type="term" value="F:fluoride transmembrane transporter activity"/>
    <property type="evidence" value="ECO:0000315"/>
    <property type="project" value="EcoCyc"/>
</dbReference>
<dbReference type="GO" id="GO:0046872">
    <property type="term" value="F:metal ion binding"/>
    <property type="evidence" value="ECO:0007669"/>
    <property type="project" value="UniProtKB-KW"/>
</dbReference>
<dbReference type="GO" id="GO:0140114">
    <property type="term" value="P:cellular detoxification of fluoride"/>
    <property type="evidence" value="ECO:0000315"/>
    <property type="project" value="EcoCyc"/>
</dbReference>
<dbReference type="GO" id="GO:1903424">
    <property type="term" value="P:fluoride transmembrane transport"/>
    <property type="evidence" value="ECO:0000315"/>
    <property type="project" value="EcoCyc"/>
</dbReference>
<dbReference type="HAMAP" id="MF_00454">
    <property type="entry name" value="FluC"/>
    <property type="match status" value="1"/>
</dbReference>
<dbReference type="InterPro" id="IPR003691">
    <property type="entry name" value="FluC"/>
</dbReference>
<dbReference type="NCBIfam" id="TIGR00494">
    <property type="entry name" value="crcB"/>
    <property type="match status" value="1"/>
</dbReference>
<dbReference type="NCBIfam" id="NF010792">
    <property type="entry name" value="PRK14196.1"/>
    <property type="match status" value="1"/>
</dbReference>
<dbReference type="PANTHER" id="PTHR28259">
    <property type="entry name" value="FLUORIDE EXPORT PROTEIN 1-RELATED"/>
    <property type="match status" value="1"/>
</dbReference>
<dbReference type="PANTHER" id="PTHR28259:SF1">
    <property type="entry name" value="FLUORIDE EXPORT PROTEIN 1-RELATED"/>
    <property type="match status" value="1"/>
</dbReference>
<dbReference type="Pfam" id="PF02537">
    <property type="entry name" value="CRCB"/>
    <property type="match status" value="1"/>
</dbReference>
<protein>
    <recommendedName>
        <fullName evidence="1 7">Fluoride-specific ion channel FluC</fullName>
    </recommendedName>
    <alternativeName>
        <fullName evidence="7">Fluoride exporter</fullName>
    </alternativeName>
</protein>
<keyword id="KW-0997">Cell inner membrane</keyword>
<keyword id="KW-1003">Cell membrane</keyword>
<keyword id="KW-0407">Ion channel</keyword>
<keyword id="KW-0406">Ion transport</keyword>
<keyword id="KW-0472">Membrane</keyword>
<keyword id="KW-0479">Metal-binding</keyword>
<keyword id="KW-1185">Reference proteome</keyword>
<keyword id="KW-0915">Sodium</keyword>
<keyword id="KW-0812">Transmembrane</keyword>
<keyword id="KW-1133">Transmembrane helix</keyword>
<keyword id="KW-0813">Transport</keyword>